<name>SUCC_BRUA4</name>
<feature type="chain" id="PRO_1000082147" description="Succinate--CoA ligase [ADP-forming] subunit beta">
    <location>
        <begin position="1"/>
        <end position="398"/>
    </location>
</feature>
<feature type="domain" description="ATP-grasp" evidence="1">
    <location>
        <begin position="9"/>
        <end position="254"/>
    </location>
</feature>
<feature type="binding site" evidence="1">
    <location>
        <position position="46"/>
    </location>
    <ligand>
        <name>ATP</name>
        <dbReference type="ChEBI" id="CHEBI:30616"/>
    </ligand>
</feature>
<feature type="binding site" evidence="1">
    <location>
        <begin position="53"/>
        <end position="55"/>
    </location>
    <ligand>
        <name>ATP</name>
        <dbReference type="ChEBI" id="CHEBI:30616"/>
    </ligand>
</feature>
<feature type="binding site" evidence="1">
    <location>
        <position position="109"/>
    </location>
    <ligand>
        <name>ATP</name>
        <dbReference type="ChEBI" id="CHEBI:30616"/>
    </ligand>
</feature>
<feature type="binding site" evidence="1">
    <location>
        <position position="112"/>
    </location>
    <ligand>
        <name>ATP</name>
        <dbReference type="ChEBI" id="CHEBI:30616"/>
    </ligand>
</feature>
<feature type="binding site" evidence="1">
    <location>
        <position position="117"/>
    </location>
    <ligand>
        <name>ATP</name>
        <dbReference type="ChEBI" id="CHEBI:30616"/>
    </ligand>
</feature>
<feature type="binding site" evidence="1">
    <location>
        <position position="209"/>
    </location>
    <ligand>
        <name>Mg(2+)</name>
        <dbReference type="ChEBI" id="CHEBI:18420"/>
    </ligand>
</feature>
<feature type="binding site" evidence="1">
    <location>
        <position position="223"/>
    </location>
    <ligand>
        <name>Mg(2+)</name>
        <dbReference type="ChEBI" id="CHEBI:18420"/>
    </ligand>
</feature>
<feature type="binding site" evidence="1">
    <location>
        <position position="274"/>
    </location>
    <ligand>
        <name>substrate</name>
        <note>ligand shared with subunit alpha</note>
    </ligand>
</feature>
<feature type="binding site" evidence="1">
    <location>
        <begin position="331"/>
        <end position="333"/>
    </location>
    <ligand>
        <name>substrate</name>
        <note>ligand shared with subunit alpha</note>
    </ligand>
</feature>
<evidence type="ECO:0000255" key="1">
    <source>
        <dbReference type="HAMAP-Rule" id="MF_00558"/>
    </source>
</evidence>
<organism>
    <name type="scientific">Brucella anthropi (strain ATCC 49188 / DSM 6882 / CCUG 24695 / JCM 21032 / LMG 3331 / NBRC 15819 / NCTC 12168 / Alc 37)</name>
    <name type="common">Ochrobactrum anthropi</name>
    <dbReference type="NCBI Taxonomy" id="439375"/>
    <lineage>
        <taxon>Bacteria</taxon>
        <taxon>Pseudomonadati</taxon>
        <taxon>Pseudomonadota</taxon>
        <taxon>Alphaproteobacteria</taxon>
        <taxon>Hyphomicrobiales</taxon>
        <taxon>Brucellaceae</taxon>
        <taxon>Brucella/Ochrobactrum group</taxon>
        <taxon>Brucella</taxon>
    </lineage>
</organism>
<keyword id="KW-0067">ATP-binding</keyword>
<keyword id="KW-0436">Ligase</keyword>
<keyword id="KW-0460">Magnesium</keyword>
<keyword id="KW-0479">Metal-binding</keyword>
<keyword id="KW-0547">Nucleotide-binding</keyword>
<keyword id="KW-1185">Reference proteome</keyword>
<keyword id="KW-0816">Tricarboxylic acid cycle</keyword>
<dbReference type="EC" id="6.2.1.5" evidence="1"/>
<dbReference type="EMBL" id="CP000758">
    <property type="protein sequence ID" value="ABS13652.1"/>
    <property type="molecule type" value="Genomic_DNA"/>
</dbReference>
<dbReference type="RefSeq" id="WP_010657594.1">
    <property type="nucleotide sequence ID" value="NC_009667.1"/>
</dbReference>
<dbReference type="SMR" id="A6WXE8"/>
<dbReference type="STRING" id="439375.Oant_0931"/>
<dbReference type="GeneID" id="61318641"/>
<dbReference type="KEGG" id="oan:Oant_0931"/>
<dbReference type="eggNOG" id="COG0045">
    <property type="taxonomic scope" value="Bacteria"/>
</dbReference>
<dbReference type="HOGENOM" id="CLU_037430_0_2_5"/>
<dbReference type="PhylomeDB" id="A6WXE8"/>
<dbReference type="UniPathway" id="UPA00223">
    <property type="reaction ID" value="UER00999"/>
</dbReference>
<dbReference type="Proteomes" id="UP000002301">
    <property type="component" value="Chromosome 1"/>
</dbReference>
<dbReference type="GO" id="GO:0005829">
    <property type="term" value="C:cytosol"/>
    <property type="evidence" value="ECO:0007669"/>
    <property type="project" value="TreeGrafter"/>
</dbReference>
<dbReference type="GO" id="GO:0042709">
    <property type="term" value="C:succinate-CoA ligase complex"/>
    <property type="evidence" value="ECO:0007669"/>
    <property type="project" value="TreeGrafter"/>
</dbReference>
<dbReference type="GO" id="GO:0005524">
    <property type="term" value="F:ATP binding"/>
    <property type="evidence" value="ECO:0007669"/>
    <property type="project" value="UniProtKB-UniRule"/>
</dbReference>
<dbReference type="GO" id="GO:0000287">
    <property type="term" value="F:magnesium ion binding"/>
    <property type="evidence" value="ECO:0007669"/>
    <property type="project" value="UniProtKB-UniRule"/>
</dbReference>
<dbReference type="GO" id="GO:0004775">
    <property type="term" value="F:succinate-CoA ligase (ADP-forming) activity"/>
    <property type="evidence" value="ECO:0007669"/>
    <property type="project" value="UniProtKB-UniRule"/>
</dbReference>
<dbReference type="GO" id="GO:0004776">
    <property type="term" value="F:succinate-CoA ligase (GDP-forming) activity"/>
    <property type="evidence" value="ECO:0007669"/>
    <property type="project" value="RHEA"/>
</dbReference>
<dbReference type="GO" id="GO:0006104">
    <property type="term" value="P:succinyl-CoA metabolic process"/>
    <property type="evidence" value="ECO:0007669"/>
    <property type="project" value="TreeGrafter"/>
</dbReference>
<dbReference type="GO" id="GO:0006099">
    <property type="term" value="P:tricarboxylic acid cycle"/>
    <property type="evidence" value="ECO:0007669"/>
    <property type="project" value="UniProtKB-UniRule"/>
</dbReference>
<dbReference type="FunFam" id="3.30.1490.20:FF:000002">
    <property type="entry name" value="Succinate--CoA ligase [ADP-forming] subunit beta"/>
    <property type="match status" value="1"/>
</dbReference>
<dbReference type="FunFam" id="3.30.470.20:FF:000002">
    <property type="entry name" value="Succinate--CoA ligase [ADP-forming] subunit beta"/>
    <property type="match status" value="1"/>
</dbReference>
<dbReference type="FunFam" id="3.40.50.261:FF:000001">
    <property type="entry name" value="Succinate--CoA ligase [ADP-forming] subunit beta"/>
    <property type="match status" value="1"/>
</dbReference>
<dbReference type="Gene3D" id="3.30.1490.20">
    <property type="entry name" value="ATP-grasp fold, A domain"/>
    <property type="match status" value="1"/>
</dbReference>
<dbReference type="Gene3D" id="3.30.470.20">
    <property type="entry name" value="ATP-grasp fold, B domain"/>
    <property type="match status" value="1"/>
</dbReference>
<dbReference type="Gene3D" id="3.40.50.261">
    <property type="entry name" value="Succinyl-CoA synthetase domains"/>
    <property type="match status" value="1"/>
</dbReference>
<dbReference type="HAMAP" id="MF_00558">
    <property type="entry name" value="Succ_CoA_beta"/>
    <property type="match status" value="1"/>
</dbReference>
<dbReference type="InterPro" id="IPR011761">
    <property type="entry name" value="ATP-grasp"/>
</dbReference>
<dbReference type="InterPro" id="IPR013650">
    <property type="entry name" value="ATP-grasp_succ-CoA_synth-type"/>
</dbReference>
<dbReference type="InterPro" id="IPR013815">
    <property type="entry name" value="ATP_grasp_subdomain_1"/>
</dbReference>
<dbReference type="InterPro" id="IPR017866">
    <property type="entry name" value="Succ-CoA_synthase_bsu_CS"/>
</dbReference>
<dbReference type="InterPro" id="IPR005811">
    <property type="entry name" value="SUCC_ACL_C"/>
</dbReference>
<dbReference type="InterPro" id="IPR005809">
    <property type="entry name" value="Succ_CoA_ligase-like_bsu"/>
</dbReference>
<dbReference type="InterPro" id="IPR016102">
    <property type="entry name" value="Succinyl-CoA_synth-like"/>
</dbReference>
<dbReference type="NCBIfam" id="NF001913">
    <property type="entry name" value="PRK00696.1"/>
    <property type="match status" value="1"/>
</dbReference>
<dbReference type="NCBIfam" id="TIGR01016">
    <property type="entry name" value="sucCoAbeta"/>
    <property type="match status" value="1"/>
</dbReference>
<dbReference type="PANTHER" id="PTHR11815:SF10">
    <property type="entry name" value="SUCCINATE--COA LIGASE [GDP-FORMING] SUBUNIT BETA, MITOCHONDRIAL"/>
    <property type="match status" value="1"/>
</dbReference>
<dbReference type="PANTHER" id="PTHR11815">
    <property type="entry name" value="SUCCINYL-COA SYNTHETASE BETA CHAIN"/>
    <property type="match status" value="1"/>
</dbReference>
<dbReference type="Pfam" id="PF08442">
    <property type="entry name" value="ATP-grasp_2"/>
    <property type="match status" value="1"/>
</dbReference>
<dbReference type="Pfam" id="PF00549">
    <property type="entry name" value="Ligase_CoA"/>
    <property type="match status" value="1"/>
</dbReference>
<dbReference type="PIRSF" id="PIRSF001554">
    <property type="entry name" value="SucCS_beta"/>
    <property type="match status" value="1"/>
</dbReference>
<dbReference type="SUPFAM" id="SSF56059">
    <property type="entry name" value="Glutathione synthetase ATP-binding domain-like"/>
    <property type="match status" value="1"/>
</dbReference>
<dbReference type="SUPFAM" id="SSF52210">
    <property type="entry name" value="Succinyl-CoA synthetase domains"/>
    <property type="match status" value="1"/>
</dbReference>
<dbReference type="PROSITE" id="PS50975">
    <property type="entry name" value="ATP_GRASP"/>
    <property type="match status" value="1"/>
</dbReference>
<dbReference type="PROSITE" id="PS01217">
    <property type="entry name" value="SUCCINYL_COA_LIG_3"/>
    <property type="match status" value="1"/>
</dbReference>
<proteinExistence type="inferred from homology"/>
<gene>
    <name evidence="1" type="primary">sucC</name>
    <name type="ordered locus">Oant_0931</name>
</gene>
<comment type="function">
    <text evidence="1">Succinyl-CoA synthetase functions in the citric acid cycle (TCA), coupling the hydrolysis of succinyl-CoA to the synthesis of either ATP or GTP and thus represents the only step of substrate-level phosphorylation in the TCA. The beta subunit provides nucleotide specificity of the enzyme and binds the substrate succinate, while the binding sites for coenzyme A and phosphate are found in the alpha subunit.</text>
</comment>
<comment type="catalytic activity">
    <reaction evidence="1">
        <text>succinate + ATP + CoA = succinyl-CoA + ADP + phosphate</text>
        <dbReference type="Rhea" id="RHEA:17661"/>
        <dbReference type="ChEBI" id="CHEBI:30031"/>
        <dbReference type="ChEBI" id="CHEBI:30616"/>
        <dbReference type="ChEBI" id="CHEBI:43474"/>
        <dbReference type="ChEBI" id="CHEBI:57287"/>
        <dbReference type="ChEBI" id="CHEBI:57292"/>
        <dbReference type="ChEBI" id="CHEBI:456216"/>
        <dbReference type="EC" id="6.2.1.5"/>
    </reaction>
    <physiologicalReaction direction="right-to-left" evidence="1">
        <dbReference type="Rhea" id="RHEA:17663"/>
    </physiologicalReaction>
</comment>
<comment type="catalytic activity">
    <reaction evidence="1">
        <text>GTP + succinate + CoA = succinyl-CoA + GDP + phosphate</text>
        <dbReference type="Rhea" id="RHEA:22120"/>
        <dbReference type="ChEBI" id="CHEBI:30031"/>
        <dbReference type="ChEBI" id="CHEBI:37565"/>
        <dbReference type="ChEBI" id="CHEBI:43474"/>
        <dbReference type="ChEBI" id="CHEBI:57287"/>
        <dbReference type="ChEBI" id="CHEBI:57292"/>
        <dbReference type="ChEBI" id="CHEBI:58189"/>
    </reaction>
    <physiologicalReaction direction="right-to-left" evidence="1">
        <dbReference type="Rhea" id="RHEA:22122"/>
    </physiologicalReaction>
</comment>
<comment type="cofactor">
    <cofactor evidence="1">
        <name>Mg(2+)</name>
        <dbReference type="ChEBI" id="CHEBI:18420"/>
    </cofactor>
    <text evidence="1">Binds 1 Mg(2+) ion per subunit.</text>
</comment>
<comment type="pathway">
    <text evidence="1">Carbohydrate metabolism; tricarboxylic acid cycle; succinate from succinyl-CoA (ligase route): step 1/1.</text>
</comment>
<comment type="subunit">
    <text evidence="1">Heterotetramer of two alpha and two beta subunits.</text>
</comment>
<comment type="similarity">
    <text evidence="1">Belongs to the succinate/malate CoA ligase beta subunit family.</text>
</comment>
<sequence length="398" mass="42515">MNIHEYQAKRLLHTYGAPIANGVAVYSVEQAEEWAKTLPGPLYVVKSQIHAGGRGKGKFKELPADAKGGVRLAKSVEEVVANAKEMLGNTLVTKQTGPAGKQVNRLYIEDGADIDRELYLSILIDRTVGRPAFVVSTEGGMDIEAVAEETPEKIVTVAIDPAKGVTDEDASKLADALKLEGQAREDGVKLFPILYKAFTEKDMSLLEINPLIVMTDGRVRVLDAKVSFDGNALFRHPDIQELRDLSEEDEKEIEASKYDLAYVALDGNIGCMVNGAGLAMATMDIIKLYGAEPANFLDVGGGASKEKVTAAFKIITADPAVQGILVNIFGGIMKCDVIAEGVIAAVKEVGLKVPLVVRLEGTNVELGKKIINESGLNVISADDLDDAAQKIVAAVKGN</sequence>
<protein>
    <recommendedName>
        <fullName evidence="1">Succinate--CoA ligase [ADP-forming] subunit beta</fullName>
        <ecNumber evidence="1">6.2.1.5</ecNumber>
    </recommendedName>
    <alternativeName>
        <fullName evidence="1">Succinyl-CoA synthetase subunit beta</fullName>
        <shortName evidence="1">SCS-beta</shortName>
    </alternativeName>
</protein>
<reference key="1">
    <citation type="journal article" date="2011" name="J. Bacteriol.">
        <title>Genome of Ochrobactrum anthropi ATCC 49188 T, a versatile opportunistic pathogen and symbiont of several eukaryotic hosts.</title>
        <authorList>
            <person name="Chain P.S."/>
            <person name="Lang D.M."/>
            <person name="Comerci D.J."/>
            <person name="Malfatti S.A."/>
            <person name="Vergez L.M."/>
            <person name="Shin M."/>
            <person name="Ugalde R.A."/>
            <person name="Garcia E."/>
            <person name="Tolmasky M.E."/>
        </authorList>
    </citation>
    <scope>NUCLEOTIDE SEQUENCE [LARGE SCALE GENOMIC DNA]</scope>
    <source>
        <strain>ATCC 49188 / DSM 6882 / CCUG 24695 / JCM 21032 / LMG 3331 / NBRC 15819 / NCTC 12168 / Alc 37</strain>
    </source>
</reference>
<accession>A6WXE8</accession>